<comment type="function">
    <text evidence="6">An essential GTPase which binds GTP, GDP and ppGpp with moderate affinity (with a twofold preference for GDP over GTP), shows high guanine nucleotide exchange rate constants for both nucleotides, and has a relatively low GTP hydrolysis rate. Deletion of the 159 N-terminal residues makes a protein that is non-functional in vivo but which retains nucleotide binding and GTPase activity. Required for cell cycle progression from G1 to S phase and for DNA replication.</text>
</comment>
<comment type="cofactor">
    <cofactor evidence="1">
        <name>Mg(2+)</name>
        <dbReference type="ChEBI" id="CHEBI:18420"/>
    </cofactor>
</comment>
<comment type="subunit">
    <text evidence="1">Monomer.</text>
</comment>
<comment type="subcellular location">
    <subcellularLocation>
        <location evidence="1 5">Cytoplasm</location>
    </subcellularLocation>
    <text>Cosediments in sucrose gradients with the 50S ribosomal subunit.</text>
</comment>
<comment type="induction">
    <text evidence="7">Constitutively expressed (at protein level).</text>
</comment>
<comment type="disruption phenotype">
    <text evidence="7">Essential for growth, it cannot be disrupted. As protein levels decrease translating ribosomes, but not individual subunits, also decrease.</text>
</comment>
<comment type="miscellaneous">
    <text>Site-specific mutations that are activating (168-Val) or dominant negative (173-Asn or 280-Tyr) in ras-like proteins do not have the same phenotype in this protein family.</text>
</comment>
<comment type="similarity">
    <text evidence="1">Belongs to the TRAFAC class OBG-HflX-like GTPase superfamily. OBG GTPase family.</text>
</comment>
<name>OBG_CAUVN</name>
<keyword id="KW-0963">Cytoplasm</keyword>
<keyword id="KW-0903">Direct protein sequencing</keyword>
<keyword id="KW-0342">GTP-binding</keyword>
<keyword id="KW-0378">Hydrolase</keyword>
<keyword id="KW-0460">Magnesium</keyword>
<keyword id="KW-0479">Metal-binding</keyword>
<keyword id="KW-0547">Nucleotide-binding</keyword>
<keyword id="KW-1185">Reference proteome</keyword>
<protein>
    <recommendedName>
        <fullName evidence="1">GTPase Obg/CgtA</fullName>
        <ecNumber evidence="1">3.6.5.-</ecNumber>
    </recommendedName>
    <alternativeName>
        <fullName>CgtAC</fullName>
    </alternativeName>
    <alternativeName>
        <fullName evidence="1">GTP-binding protein Obg</fullName>
    </alternativeName>
</protein>
<proteinExistence type="evidence at protein level"/>
<dbReference type="EC" id="3.6.5.-" evidence="1"/>
<dbReference type="EMBL" id="AF019407">
    <property type="protein sequence ID" value="AAB81507.1"/>
    <property type="molecule type" value="Genomic_DNA"/>
</dbReference>
<dbReference type="EMBL" id="CP001340">
    <property type="protein sequence ID" value="ACL93784.1"/>
    <property type="molecule type" value="Genomic_DNA"/>
</dbReference>
<dbReference type="RefSeq" id="YP_002515692.1">
    <property type="nucleotide sequence ID" value="NC_011916.1"/>
</dbReference>
<dbReference type="SMR" id="B8GYI7"/>
<dbReference type="GeneID" id="7330770"/>
<dbReference type="KEGG" id="ccs:CCNA_00317"/>
<dbReference type="PATRIC" id="fig|565050.3.peg.315"/>
<dbReference type="HOGENOM" id="CLU_011747_2_0_5"/>
<dbReference type="OrthoDB" id="9807318at2"/>
<dbReference type="PhylomeDB" id="B8GYI7"/>
<dbReference type="PRO" id="PR:B8GYI7"/>
<dbReference type="Proteomes" id="UP000001364">
    <property type="component" value="Chromosome"/>
</dbReference>
<dbReference type="GO" id="GO:0005737">
    <property type="term" value="C:cytoplasm"/>
    <property type="evidence" value="ECO:0007669"/>
    <property type="project" value="UniProtKB-SubCell"/>
</dbReference>
<dbReference type="GO" id="GO:0005525">
    <property type="term" value="F:GTP binding"/>
    <property type="evidence" value="ECO:0007669"/>
    <property type="project" value="UniProtKB-UniRule"/>
</dbReference>
<dbReference type="GO" id="GO:0003924">
    <property type="term" value="F:GTPase activity"/>
    <property type="evidence" value="ECO:0007669"/>
    <property type="project" value="UniProtKB-UniRule"/>
</dbReference>
<dbReference type="GO" id="GO:0000287">
    <property type="term" value="F:magnesium ion binding"/>
    <property type="evidence" value="ECO:0007669"/>
    <property type="project" value="InterPro"/>
</dbReference>
<dbReference type="GO" id="GO:0042254">
    <property type="term" value="P:ribosome biogenesis"/>
    <property type="evidence" value="ECO:0007669"/>
    <property type="project" value="UniProtKB-UniRule"/>
</dbReference>
<dbReference type="CDD" id="cd01898">
    <property type="entry name" value="Obg"/>
    <property type="match status" value="1"/>
</dbReference>
<dbReference type="FunFam" id="2.70.210.12:FF:000001">
    <property type="entry name" value="GTPase Obg"/>
    <property type="match status" value="1"/>
</dbReference>
<dbReference type="Gene3D" id="2.70.210.12">
    <property type="entry name" value="GTP1/OBG domain"/>
    <property type="match status" value="1"/>
</dbReference>
<dbReference type="Gene3D" id="3.40.50.300">
    <property type="entry name" value="P-loop containing nucleotide triphosphate hydrolases"/>
    <property type="match status" value="1"/>
</dbReference>
<dbReference type="HAMAP" id="MF_01454">
    <property type="entry name" value="GTPase_Obg"/>
    <property type="match status" value="1"/>
</dbReference>
<dbReference type="InterPro" id="IPR031167">
    <property type="entry name" value="G_OBG"/>
</dbReference>
<dbReference type="InterPro" id="IPR006073">
    <property type="entry name" value="GTP-bd"/>
</dbReference>
<dbReference type="InterPro" id="IPR014100">
    <property type="entry name" value="GTP-bd_Obg/CgtA"/>
</dbReference>
<dbReference type="InterPro" id="IPR006074">
    <property type="entry name" value="GTP1-OBG_CS"/>
</dbReference>
<dbReference type="InterPro" id="IPR006169">
    <property type="entry name" value="GTP1_OBG_dom"/>
</dbReference>
<dbReference type="InterPro" id="IPR036726">
    <property type="entry name" value="GTP1_OBG_dom_sf"/>
</dbReference>
<dbReference type="InterPro" id="IPR045086">
    <property type="entry name" value="OBG_GTPase"/>
</dbReference>
<dbReference type="InterPro" id="IPR027417">
    <property type="entry name" value="P-loop_NTPase"/>
</dbReference>
<dbReference type="NCBIfam" id="TIGR02729">
    <property type="entry name" value="Obg_CgtA"/>
    <property type="match status" value="1"/>
</dbReference>
<dbReference type="NCBIfam" id="NF008955">
    <property type="entry name" value="PRK12297.1"/>
    <property type="match status" value="1"/>
</dbReference>
<dbReference type="NCBIfam" id="NF008956">
    <property type="entry name" value="PRK12299.1"/>
    <property type="match status" value="1"/>
</dbReference>
<dbReference type="PANTHER" id="PTHR11702">
    <property type="entry name" value="DEVELOPMENTALLY REGULATED GTP-BINDING PROTEIN-RELATED"/>
    <property type="match status" value="1"/>
</dbReference>
<dbReference type="PANTHER" id="PTHR11702:SF31">
    <property type="entry name" value="MITOCHONDRIAL RIBOSOME-ASSOCIATED GTPASE 2"/>
    <property type="match status" value="1"/>
</dbReference>
<dbReference type="Pfam" id="PF01018">
    <property type="entry name" value="GTP1_OBG"/>
    <property type="match status" value="1"/>
</dbReference>
<dbReference type="Pfam" id="PF01926">
    <property type="entry name" value="MMR_HSR1"/>
    <property type="match status" value="1"/>
</dbReference>
<dbReference type="PIRSF" id="PIRSF002401">
    <property type="entry name" value="GTP_bd_Obg/CgtA"/>
    <property type="match status" value="1"/>
</dbReference>
<dbReference type="PRINTS" id="PR00326">
    <property type="entry name" value="GTP1OBG"/>
</dbReference>
<dbReference type="SUPFAM" id="SSF82051">
    <property type="entry name" value="Obg GTP-binding protein N-terminal domain"/>
    <property type="match status" value="1"/>
</dbReference>
<dbReference type="SUPFAM" id="SSF52540">
    <property type="entry name" value="P-loop containing nucleoside triphosphate hydrolases"/>
    <property type="match status" value="1"/>
</dbReference>
<dbReference type="PROSITE" id="PS51710">
    <property type="entry name" value="G_OBG"/>
    <property type="match status" value="1"/>
</dbReference>
<dbReference type="PROSITE" id="PS00905">
    <property type="entry name" value="GTP1_OBG"/>
    <property type="match status" value="1"/>
</dbReference>
<dbReference type="PROSITE" id="PS51883">
    <property type="entry name" value="OBG"/>
    <property type="match status" value="1"/>
</dbReference>
<sequence length="354" mass="37871">MKFLDQCKIYIRSGNGGGGSVSFRREKYIEYGGPDGGDGGRGGDVWIEAVEGLNTLIDYRYQQHFKAGTGVHGMGRARHGAAGEDVVLKVPVGTEVLEEDKETLIADLDHAGMRLLLAKGGNGGWGNLHFKGPVNQAPKYANPGQEGEERWIWLRLKLIADVGLVGLPNAGKSTFLAAASAAKPKIADYPFTTLTPNLGVVDLSSSERFVLADIPGLIEGASEGAGLGTRFLGHVERSATLIHLIDATQDDVAGAYETIRGELEAYGDELADKAEILALNKIDALDEETLAEKVAELEAVSGIKPRLVSGVSGQGVTELLRAAYKQVRIRRGDLEEEIDDDEDHVDETPGGWTP</sequence>
<gene>
    <name type="primary">cgtA</name>
    <name type="synonym">obg</name>
    <name type="ordered locus">CCNA_00317</name>
</gene>
<feature type="chain" id="PRO_0000385810" description="GTPase Obg/CgtA">
    <location>
        <begin position="1"/>
        <end position="354"/>
    </location>
</feature>
<feature type="domain" description="Obg" evidence="2">
    <location>
        <begin position="1"/>
        <end position="159"/>
    </location>
</feature>
<feature type="domain" description="OBG-type G" evidence="1">
    <location>
        <begin position="160"/>
        <end position="328"/>
    </location>
</feature>
<feature type="region of interest" description="Disordered" evidence="3">
    <location>
        <begin position="335"/>
        <end position="354"/>
    </location>
</feature>
<feature type="compositionally biased region" description="Acidic residues" evidence="3">
    <location>
        <begin position="335"/>
        <end position="345"/>
    </location>
</feature>
<feature type="binding site" evidence="1">
    <location>
        <begin position="166"/>
        <end position="173"/>
    </location>
    <ligand>
        <name>GTP</name>
        <dbReference type="ChEBI" id="CHEBI:37565"/>
    </ligand>
</feature>
<feature type="binding site" evidence="1">
    <location>
        <position position="173"/>
    </location>
    <ligand>
        <name>Mg(2+)</name>
        <dbReference type="ChEBI" id="CHEBI:18420"/>
    </ligand>
</feature>
<feature type="binding site" evidence="1">
    <location>
        <begin position="191"/>
        <end position="195"/>
    </location>
    <ligand>
        <name>GTP</name>
        <dbReference type="ChEBI" id="CHEBI:37565"/>
    </ligand>
</feature>
<feature type="binding site" evidence="1">
    <location>
        <position position="193"/>
    </location>
    <ligand>
        <name>Mg(2+)</name>
        <dbReference type="ChEBI" id="CHEBI:18420"/>
    </ligand>
</feature>
<feature type="binding site" evidence="1">
    <location>
        <begin position="213"/>
        <end position="216"/>
    </location>
    <ligand>
        <name>GTP</name>
        <dbReference type="ChEBI" id="CHEBI:37565"/>
    </ligand>
</feature>
<feature type="binding site" evidence="1">
    <location>
        <begin position="280"/>
        <end position="283"/>
    </location>
    <ligand>
        <name>GTP</name>
        <dbReference type="ChEBI" id="CHEBI:37565"/>
    </ligand>
</feature>
<feature type="binding site" evidence="1">
    <location>
        <begin position="309"/>
        <end position="311"/>
    </location>
    <ligand>
        <name>GTP</name>
        <dbReference type="ChEBI" id="CHEBI:37565"/>
    </ligand>
</feature>
<feature type="mutagenesis site" description="Grow slowly at 23 degrees Celsius, die at 37 degrees Celsius; decrease in 50S ribosomal subunits at both temperatures, partial cell division arrest at 37 degrees Celsius." evidence="6">
    <original>G</original>
    <variation>E</variation>
    <location>
        <position position="80"/>
    </location>
</feature>
<feature type="mutagenesis site" description="Grows like wild-type at 30 degrees Celsius." evidence="6">
    <original>P</original>
    <variation>G</variation>
    <location>
        <position position="168"/>
    </location>
</feature>
<feature type="mutagenesis site" description="Grows poorly at 30 degrees Celsius, slightly cold-sensitive." evidence="6">
    <original>P</original>
    <variation>R</variation>
    <location>
        <position position="168"/>
    </location>
</feature>
<feature type="mutagenesis site" description="Grows like wild-type at 30 degrees Celsius, slightly cold-sensitive. Slight reduction in affinity for GDP, slight increase in GDP exchange rates." evidence="6">
    <original>P</original>
    <variation>V</variation>
    <location>
        <position position="168"/>
    </location>
</feature>
<feature type="mutagenesis site" description="Unable to support growth." evidence="5">
    <original>GKS</original>
    <variation>AAA</variation>
    <location>
        <begin position="171"/>
        <end position="173"/>
    </location>
</feature>
<feature type="mutagenesis site" description="Unable to support growth." evidence="6">
    <original>G</original>
    <variation>A</variation>
    <location>
        <position position="171"/>
    </location>
</feature>
<feature type="mutagenesis site" description="Unable to support growth." evidence="6">
    <original>K</original>
    <variation>N</variation>
    <location>
        <position position="172"/>
    </location>
</feature>
<feature type="mutagenesis site" description="Unable to support growth. Does not bind GTP, decreased binding of GDP." evidence="6">
    <original>S</original>
    <variation>N</variation>
    <location>
        <position position="173"/>
    </location>
</feature>
<feature type="mutagenesis site" description="Supports growth. 2.5-fold and 7-fold reduced binding to GDP and GTP respectively. No change in the GTP hydrolysis rate." evidence="4">
    <original>T</original>
    <variation>A</variation>
    <location>
        <position position="192"/>
    </location>
</feature>
<feature type="mutagenesis site" description="Unable to support growth. 5-fold and 22-fold reduced binding to GDP and GTP respectively. 10-fold decreased GTP hydrolysis rate." evidence="4">
    <original>T</original>
    <variation>A</variation>
    <location>
        <position position="193"/>
    </location>
</feature>
<feature type="mutagenesis site" description="Unable to support growth." evidence="6">
    <original>DIPG</original>
    <variation>AIPA</variation>
    <location>
        <begin position="213"/>
        <end position="216"/>
    </location>
</feature>
<feature type="mutagenesis site" description="Grows poorly at 30 degrees Celsius." evidence="6">
    <original>N</original>
    <variation>K</variation>
    <variation>Y</variation>
    <location>
        <position position="280"/>
    </location>
</feature>
<feature type="mutagenesis site" description="No effect. Replacment of this region with an epitope tag (3HA) decreases growth rate." evidence="5">
    <location>
        <begin position="348"/>
        <end position="354"/>
    </location>
</feature>
<organism>
    <name type="scientific">Caulobacter vibrioides (strain NA1000 / CB15N)</name>
    <name type="common">Caulobacter crescentus</name>
    <dbReference type="NCBI Taxonomy" id="565050"/>
    <lineage>
        <taxon>Bacteria</taxon>
        <taxon>Pseudomonadati</taxon>
        <taxon>Pseudomonadota</taxon>
        <taxon>Alphaproteobacteria</taxon>
        <taxon>Caulobacterales</taxon>
        <taxon>Caulobacteraceae</taxon>
        <taxon>Caulobacter</taxon>
    </lineage>
</organism>
<reference key="1">
    <citation type="journal article" date="1997" name="J. Bacteriol.">
        <title>Identification of an essential Caulobacter crescentus gene encoding a member of the Obg family of GTP-binding proteins.</title>
        <authorList>
            <person name="Maddock J."/>
            <person name="Bhatt A."/>
            <person name="Koch M."/>
            <person name="Skidmore J."/>
        </authorList>
    </citation>
    <scope>NUCLEOTIDE SEQUENCE [GENOMIC DNA]</scope>
    <scope>INDUCTION</scope>
    <scope>DISRUPTION PHENOTYPE</scope>
</reference>
<reference key="2">
    <citation type="journal article" date="2010" name="J. Bacteriol.">
        <title>The genetic basis of laboratory adaptation in Caulobacter crescentus.</title>
        <authorList>
            <person name="Marks M.E."/>
            <person name="Castro-Rojas C.M."/>
            <person name="Teiling C."/>
            <person name="Du L."/>
            <person name="Kapatral V."/>
            <person name="Walunas T.L."/>
            <person name="Crosson S."/>
        </authorList>
    </citation>
    <scope>NUCLEOTIDE SEQUENCE [LARGE SCALE GENOMIC DNA]</scope>
    <source>
        <strain>NA1000 / CB15N</strain>
    </source>
</reference>
<reference key="3">
    <citation type="journal article" date="1999" name="J. Bacteriol.">
        <title>The Caulobacter crescentus CgtA protein displays unusual guanine nucleotide binding and exchange properties.</title>
        <authorList>
            <person name="Lin B."/>
            <person name="Covalle K.L."/>
            <person name="Maddock J.R."/>
        </authorList>
    </citation>
    <scope>PROTEIN SEQUENCE OF N-TERMINUS</scope>
    <scope>GDP- AND GTP-BINDING</scope>
    <scope>POSSIBLE COFACTOR</scope>
    <scope>GTPASE ACTIVITY</scope>
    <scope>NUCLEOTIDE-EXCHANGE RATES</scope>
</reference>
<reference key="4">
    <citation type="journal article" date="2001" name="FEBS Lett.">
        <title>The N-terminal domain of the Caulobacter crescentus CgtA protein does not function as a guanine nucleotide exchange factor.</title>
        <authorList>
            <person name="Lin B."/>
            <person name="Maddock J.R."/>
        </authorList>
    </citation>
    <scope>DELETION OF N-TERMINAL 159 AMINO ACIDS</scope>
</reference>
<reference key="5">
    <citation type="journal article" date="2001" name="Mol. Microbiol.">
        <title>Alanine scan mutagenesis of the switch I domain of the Caulobacter crescentus CgtA protein reveals critical amino acids required for in vivo function.</title>
        <authorList>
            <person name="Lin B."/>
            <person name="Skidmore J.M."/>
            <person name="Bhatt A."/>
            <person name="Pfeffer S.M."/>
            <person name="Pawloski L."/>
            <person name="Maddock J.R."/>
        </authorList>
    </citation>
    <scope>PROTEIN SEQUENCE OF 176-181</scope>
    <scope>MUTAGENESIS OF THR-192 AND THR-193</scope>
</reference>
<reference key="6">
    <citation type="journal article" date="2004" name="J. Bacteriol.">
        <title>The Caulobacter crescentus CgtAC protein cosediments with the free 50S ribosomal subunit.</title>
        <authorList>
            <person name="Lin B."/>
            <person name="Thayer D.A."/>
            <person name="Maddock J.R."/>
        </authorList>
    </citation>
    <scope>SUBCELLULAR LOCATION</scope>
    <scope>LARGE SUBUNIT RIBOSOME ASSOCIATION</scope>
    <scope>MUTAGENESIS OF C-TERMINUS</scope>
</reference>
<reference key="7">
    <citation type="journal article" date="2004" name="Mol. Microbiol.">
        <title>The Caulobacter crescentus GTPase CgtAC is required for progression through the cell cycle and for maintaining 50S ribosomal subunit levels.</title>
        <authorList>
            <person name="Datta K."/>
            <person name="Skidmore J.M."/>
            <person name="Pu K."/>
            <person name="Maddock J.R."/>
        </authorList>
    </citation>
    <scope>FUNCTION IN CELL CYCLE PROGRESSION</scope>
    <scope>MUTAGENESIS OF GLY-80; PRO-168; GLY-171; LYS-172; SER-173; 213-ASP--GLY-216 AND ASN-280</scope>
</reference>
<reference key="8">
    <citation type="journal article" date="2005" name="Acta Biochim. Pol.">
        <title>The Obg subfamily of bacterial GTP-binding proteins: essential proteins of largely unknown functions that are evolutionarily conserved from bacteria to humans.</title>
        <authorList>
            <person name="Czyz A."/>
            <person name="Wegrzyn G."/>
        </authorList>
    </citation>
    <scope>REVIEW</scope>
</reference>
<reference key="9">
    <citation type="journal article" date="2005" name="Dev. Cell">
        <title>Obg/CtgA, a signaling protein that controls replication, translation, and morphological development?</title>
        <authorList>
            <person name="Michel B."/>
        </authorList>
    </citation>
    <scope>REVIEW</scope>
</reference>
<accession>B8GYI7</accession>
<accession>O30861</accession>
<accession>Q7DB40</accession>
<evidence type="ECO:0000255" key="1">
    <source>
        <dbReference type="HAMAP-Rule" id="MF_01454"/>
    </source>
</evidence>
<evidence type="ECO:0000255" key="2">
    <source>
        <dbReference type="PROSITE-ProRule" id="PRU01231"/>
    </source>
</evidence>
<evidence type="ECO:0000256" key="3">
    <source>
        <dbReference type="SAM" id="MobiDB-lite"/>
    </source>
</evidence>
<evidence type="ECO:0000269" key="4">
    <source>
    </source>
</evidence>
<evidence type="ECO:0000269" key="5">
    <source>
    </source>
</evidence>
<evidence type="ECO:0000269" key="6">
    <source>
    </source>
</evidence>
<evidence type="ECO:0000269" key="7">
    <source>
    </source>
</evidence>